<dbReference type="EMBL" id="BC099996">
    <property type="protein sequence ID" value="AAH99996.1"/>
    <property type="molecule type" value="mRNA"/>
</dbReference>
<dbReference type="RefSeq" id="NP_001029348.1">
    <property type="nucleotide sequence ID" value="NM_001034176.1"/>
</dbReference>
<dbReference type="SMR" id="Q499B3"/>
<dbReference type="FunCoup" id="Q499B3">
    <property type="interactions" value="1425"/>
</dbReference>
<dbReference type="STRING" id="7955.ENSDARP00000060632"/>
<dbReference type="ESTHER" id="danre-kanl3">
    <property type="family name" value="NLS3-Tex30"/>
</dbReference>
<dbReference type="PaxDb" id="7955-ENSDARP00000060632"/>
<dbReference type="Ensembl" id="ENSDART00000060633">
    <property type="protein sequence ID" value="ENSDARP00000060632"/>
    <property type="gene ID" value="ENSDARG00000029556"/>
</dbReference>
<dbReference type="GeneID" id="555951"/>
<dbReference type="KEGG" id="dre:555951"/>
<dbReference type="AGR" id="ZFIN:ZDB-GENE-050809-132"/>
<dbReference type="CTD" id="55683"/>
<dbReference type="ZFIN" id="ZDB-GENE-050809-132">
    <property type="gene designation" value="kansl3"/>
</dbReference>
<dbReference type="eggNOG" id="KOG3253">
    <property type="taxonomic scope" value="Eukaryota"/>
</dbReference>
<dbReference type="InParanoid" id="Q499B3"/>
<dbReference type="OMA" id="WEEHVNX"/>
<dbReference type="OrthoDB" id="6415022at2759"/>
<dbReference type="PhylomeDB" id="Q499B3"/>
<dbReference type="TreeFam" id="TF323466"/>
<dbReference type="PRO" id="PR:Q499B3"/>
<dbReference type="Proteomes" id="UP000000437">
    <property type="component" value="Chromosome 8"/>
</dbReference>
<dbReference type="Bgee" id="ENSDARG00000029556">
    <property type="expression patterns" value="Expressed in testis and 27 other cell types or tissues"/>
</dbReference>
<dbReference type="ExpressionAtlas" id="Q499B3">
    <property type="expression patterns" value="baseline and differential"/>
</dbReference>
<dbReference type="GO" id="GO:0000123">
    <property type="term" value="C:histone acetyltransferase complex"/>
    <property type="evidence" value="ECO:0000250"/>
    <property type="project" value="UniProtKB"/>
</dbReference>
<dbReference type="GO" id="GO:0005739">
    <property type="term" value="C:mitochondrion"/>
    <property type="evidence" value="ECO:0000250"/>
    <property type="project" value="UniProtKB"/>
</dbReference>
<dbReference type="GO" id="GO:0044545">
    <property type="term" value="C:NSL complex"/>
    <property type="evidence" value="ECO:0000250"/>
    <property type="project" value="UniProtKB"/>
</dbReference>
<dbReference type="GO" id="GO:0005634">
    <property type="term" value="C:nucleus"/>
    <property type="evidence" value="ECO:0007669"/>
    <property type="project" value="UniProtKB-SubCell"/>
</dbReference>
<dbReference type="GO" id="GO:0006325">
    <property type="term" value="P:chromatin organization"/>
    <property type="evidence" value="ECO:0007669"/>
    <property type="project" value="UniProtKB-KW"/>
</dbReference>
<dbReference type="GO" id="GO:0045944">
    <property type="term" value="P:positive regulation of transcription by RNA polymerase II"/>
    <property type="evidence" value="ECO:0000318"/>
    <property type="project" value="GO_Central"/>
</dbReference>
<dbReference type="GO" id="GO:1903108">
    <property type="term" value="P:regulation of mitochondrial transcription"/>
    <property type="evidence" value="ECO:0000250"/>
    <property type="project" value="UniProtKB"/>
</dbReference>
<dbReference type="FunFam" id="3.40.50.1820:FF:000032">
    <property type="entry name" value="KAT8 regulatory NSL complex subunit 3 isoform X2"/>
    <property type="match status" value="1"/>
</dbReference>
<dbReference type="Gene3D" id="3.40.50.1820">
    <property type="entry name" value="alpha/beta hydrolase"/>
    <property type="match status" value="1"/>
</dbReference>
<dbReference type="InterPro" id="IPR029058">
    <property type="entry name" value="AB_hydrolase_fold"/>
</dbReference>
<dbReference type="InterPro" id="IPR046879">
    <property type="entry name" value="KANL3/Tex30_Abhydrolase"/>
</dbReference>
<dbReference type="InterPro" id="IPR056519">
    <property type="entry name" value="KANSL3_1st"/>
</dbReference>
<dbReference type="InterPro" id="IPR026555">
    <property type="entry name" value="NSL3/Tex30"/>
</dbReference>
<dbReference type="PANTHER" id="PTHR13136:SF16">
    <property type="entry name" value="KAT8 REGULATORY NSL COMPLEX SUBUNIT 3"/>
    <property type="match status" value="1"/>
</dbReference>
<dbReference type="PANTHER" id="PTHR13136">
    <property type="entry name" value="TESTIS DEVELOPMENT PROTEIN PRTD"/>
    <property type="match status" value="1"/>
</dbReference>
<dbReference type="Pfam" id="PF20408">
    <property type="entry name" value="Abhydrolase_11"/>
    <property type="match status" value="1"/>
</dbReference>
<dbReference type="Pfam" id="PF23154">
    <property type="entry name" value="KANSL3_1st"/>
    <property type="match status" value="1"/>
</dbReference>
<dbReference type="SUPFAM" id="SSF53474">
    <property type="entry name" value="alpha/beta-Hydrolases"/>
    <property type="match status" value="1"/>
</dbReference>
<organism>
    <name type="scientific">Danio rerio</name>
    <name type="common">Zebrafish</name>
    <name type="synonym">Brachydanio rerio</name>
    <dbReference type="NCBI Taxonomy" id="7955"/>
    <lineage>
        <taxon>Eukaryota</taxon>
        <taxon>Metazoa</taxon>
        <taxon>Chordata</taxon>
        <taxon>Craniata</taxon>
        <taxon>Vertebrata</taxon>
        <taxon>Euteleostomi</taxon>
        <taxon>Actinopterygii</taxon>
        <taxon>Neopterygii</taxon>
        <taxon>Teleostei</taxon>
        <taxon>Ostariophysi</taxon>
        <taxon>Cypriniformes</taxon>
        <taxon>Danionidae</taxon>
        <taxon>Danioninae</taxon>
        <taxon>Danio</taxon>
    </lineage>
</organism>
<comment type="function">
    <text evidence="1 2">Non-catalytic component of the NSL histone acetyltransferase complex, a multiprotein complex that mediates histone H4 acetylation at 'Lys-5'- and 'Lys-8' (H4K5ac and H4K8ac) at transcription start sites and promotes transcription initiation. The NSL complex also acts as a regulator of gene expression in mitochondria. Within the NSL complex, KANSL3 is required to promote KAT8 association with mitochondrial DNA. Required for transcription of intraciliary transport genes in both ciliated and non-ciliated cells. This is necessary for cilium assembly in ciliated cells and for organization of the microtubule cytoskeleton in non-ciliated cells. Also required within the NSL complex to maintain nuclear architecture stability by promoting KAT8-mediated acetylation of lamin LMNA. Plays an essential role in spindle assembly during mitosis. Acts as a microtubule minus-end binding protein which stabilizes microtubules and promotes their assembly.</text>
</comment>
<comment type="subunit">
    <text evidence="2">Component of the NSL complex.</text>
</comment>
<comment type="subcellular location">
    <subcellularLocation>
        <location evidence="2">Nucleus</location>
    </subcellularLocation>
    <subcellularLocation>
        <location evidence="2">Mitochondrion</location>
    </subcellularLocation>
    <subcellularLocation>
        <location evidence="2">Cytoplasm</location>
        <location evidence="2">Cytoskeleton</location>
        <location evidence="2">Spindle pole</location>
    </subcellularLocation>
    <text evidence="2">Concentrated in the nucleus during interphase but displays a marked relocalization to the spindle poles during mitosis.</text>
</comment>
<gene>
    <name type="primary">kansl3</name>
    <name type="synonym">nsl3</name>
    <name type="ORF">zgc:109953</name>
</gene>
<accession>Q499B3</accession>
<protein>
    <recommendedName>
        <fullName>KAT8 regulatory NSL complex subunit 3</fullName>
    </recommendedName>
    <alternativeName>
        <fullName>NSL complex protein NSL3</fullName>
    </alternativeName>
    <alternativeName>
        <fullName>Non-specific lethal 3 homolog</fullName>
    </alternativeName>
</protein>
<sequence>MFRPGGERDFQTSARRMGTSLLFQLSVHERELDLVFLDHSYAKPWNAHPDASSARPTRMLFVTPRRQPEASGDSDMSIDVETVTPTPMPLYDNQKARSVMNECDRHVLFARTVADGPPPPDDWEEHINKTGWSLAQNKLFNKVLKALQAERLGRLANDGACNEPVLRRIAVDKCARKVRHALSSVSWDIKLTHWLHNTLLESLSLAMLAAYLDVLQTLKSKVPSLIDRMLLSSSVKTGAAGAEALSLLLKRPWDPAVGVLSHNKPSKLPGSPLILIAPSGPTNPAFPTSRRMRFWQSQLSCLGKVIPINVHVGSGANVGITQCLEHMIGTVRGKVIEVHSHFPHKPIILVGWNVGSLMACHVSLMEYMTAVVCLGFPLQTISGPRGDVDDPLLDMKTPVLFVVGQNALQCSPENMEEFREKIRADNSLVVVGGADDSLRINSTKMKTEGLTQTMVDRCIQDEIVDFLTGVLTRSESHGHGSGETRDLDAEKKKPRRELPFDLDRSRPSSPAVRDMSSVCSSPTASPKPKTVGLSPAQKSSLITATQLLKTHMQRSGTVLTHKQAQAQFAAFMKHNMLVRKSIPPGSPSCLFVPVPSEQVEGLERDDMRVHLKRRQTPSPTPTKASKRAKIKVTIVSHGDAAGNTPGSTAQEVGLSGKPLGLTVGQTTVSGAKELSELLSAQRSGGLAEVSGALASSEGSFHSLQGSVISRSSSPVQAAGTAQAPSASSLLQGLSLSLQEINTKSPGVPSTTQVSGGKPQGQGQVLSSLSPGSGTLVRAVPMVSTGSGMTKTTAIHQLLTNGGLAKLANSLPGLAHVSSQSSGTSSTPRSKQRRPR</sequence>
<name>KANL3_DANRE</name>
<feature type="chain" id="PRO_0000287140" description="KAT8 regulatory NSL complex subunit 3">
    <location>
        <begin position="1"/>
        <end position="835"/>
    </location>
</feature>
<feature type="region of interest" description="Disordered" evidence="3">
    <location>
        <begin position="474"/>
        <end position="537"/>
    </location>
</feature>
<feature type="region of interest" description="Disordered" evidence="3">
    <location>
        <begin position="742"/>
        <end position="772"/>
    </location>
</feature>
<feature type="region of interest" description="Disordered" evidence="3">
    <location>
        <begin position="813"/>
        <end position="835"/>
    </location>
</feature>
<feature type="compositionally biased region" description="Basic and acidic residues" evidence="3">
    <location>
        <begin position="474"/>
        <end position="506"/>
    </location>
</feature>
<feature type="compositionally biased region" description="Low complexity" evidence="3">
    <location>
        <begin position="817"/>
        <end position="828"/>
    </location>
</feature>
<keyword id="KW-0156">Chromatin regulator</keyword>
<keyword id="KW-0963">Cytoplasm</keyword>
<keyword id="KW-0206">Cytoskeleton</keyword>
<keyword id="KW-0493">Microtubule</keyword>
<keyword id="KW-0496">Mitochondrion</keyword>
<keyword id="KW-0539">Nucleus</keyword>
<keyword id="KW-1185">Reference proteome</keyword>
<reference key="1">
    <citation type="submission" date="2005-07" db="EMBL/GenBank/DDBJ databases">
        <authorList>
            <consortium name="NIH - Zebrafish Gene Collection (ZGC) project"/>
        </authorList>
    </citation>
    <scope>NUCLEOTIDE SEQUENCE [LARGE SCALE MRNA]</scope>
    <source>
        <tissue>Eye</tissue>
    </source>
</reference>
<proteinExistence type="evidence at transcript level"/>
<evidence type="ECO:0000250" key="1">
    <source>
        <dbReference type="UniProtKB" id="A2RSY1"/>
    </source>
</evidence>
<evidence type="ECO:0000250" key="2">
    <source>
        <dbReference type="UniProtKB" id="Q9P2N6"/>
    </source>
</evidence>
<evidence type="ECO:0000256" key="3">
    <source>
        <dbReference type="SAM" id="MobiDB-lite"/>
    </source>
</evidence>